<keyword id="KW-0067">ATP-binding</keyword>
<keyword id="KW-0414">Isoprene biosynthesis</keyword>
<keyword id="KW-0418">Kinase</keyword>
<keyword id="KW-0547">Nucleotide-binding</keyword>
<keyword id="KW-0808">Transferase</keyword>
<proteinExistence type="inferred from homology"/>
<comment type="function">
    <text evidence="1">Catalyzes the phosphorylation of the position 2 hydroxy group of 4-diphosphocytidyl-2C-methyl-D-erythritol.</text>
</comment>
<comment type="catalytic activity">
    <reaction evidence="1">
        <text>4-CDP-2-C-methyl-D-erythritol + ATP = 4-CDP-2-C-methyl-D-erythritol 2-phosphate + ADP + H(+)</text>
        <dbReference type="Rhea" id="RHEA:18437"/>
        <dbReference type="ChEBI" id="CHEBI:15378"/>
        <dbReference type="ChEBI" id="CHEBI:30616"/>
        <dbReference type="ChEBI" id="CHEBI:57823"/>
        <dbReference type="ChEBI" id="CHEBI:57919"/>
        <dbReference type="ChEBI" id="CHEBI:456216"/>
        <dbReference type="EC" id="2.7.1.148"/>
    </reaction>
</comment>
<comment type="pathway">
    <text evidence="1">Isoprenoid biosynthesis; isopentenyl diphosphate biosynthesis via DXP pathway; isopentenyl diphosphate from 1-deoxy-D-xylulose 5-phosphate: step 3/6.</text>
</comment>
<comment type="similarity">
    <text evidence="1">Belongs to the GHMP kinase family. IspE subfamily.</text>
</comment>
<accession>C0R2S8</accession>
<sequence length="288" mass="31846">MKSFCVKAPAKINLFLHVVDKKETGYHLIEGLFVFANLSNFLEIKVGEKDSRYDNSTVEFINSESKINNQYNTVMKAVNLLLRHAPVRTKVTVKVVKNIPIAAGLGSGSSDAGAVVRTLGKLWEIDRTILNEIALNVGADVPASVDSKPVFVRGIGEELCHIKKFSLPTNVVLVKPKKRFLSTPEVFSKHEGKFSEPIKWSDDAEKDLLKLLKETRNDLQEIAISFVPEIKDVISTLESQEGSILSRMSGSGVSCFGIFDSEENAKAAAVNIGKKQPEWWVCDTQLIV</sequence>
<organism>
    <name type="scientific">Wolbachia sp. subsp. Drosophila simulans (strain wRi)</name>
    <dbReference type="NCBI Taxonomy" id="66084"/>
    <lineage>
        <taxon>Bacteria</taxon>
        <taxon>Pseudomonadati</taxon>
        <taxon>Pseudomonadota</taxon>
        <taxon>Alphaproteobacteria</taxon>
        <taxon>Rickettsiales</taxon>
        <taxon>Anaplasmataceae</taxon>
        <taxon>Wolbachieae</taxon>
        <taxon>Wolbachia</taxon>
    </lineage>
</organism>
<protein>
    <recommendedName>
        <fullName evidence="1">4-diphosphocytidyl-2-C-methyl-D-erythritol kinase</fullName>
        <shortName evidence="1">CMK</shortName>
        <ecNumber evidence="1">2.7.1.148</ecNumber>
    </recommendedName>
    <alternativeName>
        <fullName evidence="1">4-(cytidine-5'-diphospho)-2-C-methyl-D-erythritol kinase</fullName>
    </alternativeName>
</protein>
<reference key="1">
    <citation type="journal article" date="2009" name="Proc. Natl. Acad. Sci. U.S.A.">
        <title>The mosaic genome structure of the Wolbachia wRi strain infecting Drosophila simulans.</title>
        <authorList>
            <person name="Klasson L."/>
            <person name="Westberg J."/>
            <person name="Sapountzis P."/>
            <person name="Naeslund K."/>
            <person name="Lutnaes Y."/>
            <person name="Darby A.C."/>
            <person name="Veneti Z."/>
            <person name="Chen L."/>
            <person name="Braig H.R."/>
            <person name="Garrett R."/>
            <person name="Bourtzis K."/>
            <person name="Andersson S.G."/>
        </authorList>
    </citation>
    <scope>NUCLEOTIDE SEQUENCE [LARGE SCALE GENOMIC DNA]</scope>
    <source>
        <strain>wRi</strain>
    </source>
</reference>
<name>ISPE_WOLWR</name>
<dbReference type="EC" id="2.7.1.148" evidence="1"/>
<dbReference type="EMBL" id="CP001391">
    <property type="protein sequence ID" value="ACN95220.1"/>
    <property type="molecule type" value="Genomic_DNA"/>
</dbReference>
<dbReference type="RefSeq" id="WP_006280386.1">
    <property type="nucleotide sequence ID" value="NZ_MKIF01000186.1"/>
</dbReference>
<dbReference type="SMR" id="C0R2S8"/>
<dbReference type="STRING" id="66084.WRi_004260"/>
<dbReference type="KEGG" id="wri:WRi_004260"/>
<dbReference type="HOGENOM" id="CLU_053057_1_0_5"/>
<dbReference type="UniPathway" id="UPA00056">
    <property type="reaction ID" value="UER00094"/>
</dbReference>
<dbReference type="Proteomes" id="UP000001293">
    <property type="component" value="Chromosome"/>
</dbReference>
<dbReference type="GO" id="GO:0050515">
    <property type="term" value="F:4-(cytidine 5'-diphospho)-2-C-methyl-D-erythritol kinase activity"/>
    <property type="evidence" value="ECO:0007669"/>
    <property type="project" value="UniProtKB-UniRule"/>
</dbReference>
<dbReference type="GO" id="GO:0005524">
    <property type="term" value="F:ATP binding"/>
    <property type="evidence" value="ECO:0007669"/>
    <property type="project" value="UniProtKB-UniRule"/>
</dbReference>
<dbReference type="GO" id="GO:0019288">
    <property type="term" value="P:isopentenyl diphosphate biosynthetic process, methylerythritol 4-phosphate pathway"/>
    <property type="evidence" value="ECO:0007669"/>
    <property type="project" value="UniProtKB-UniRule"/>
</dbReference>
<dbReference type="GO" id="GO:0016114">
    <property type="term" value="P:terpenoid biosynthetic process"/>
    <property type="evidence" value="ECO:0007669"/>
    <property type="project" value="InterPro"/>
</dbReference>
<dbReference type="Gene3D" id="3.30.230.10">
    <property type="match status" value="1"/>
</dbReference>
<dbReference type="Gene3D" id="3.30.70.890">
    <property type="entry name" value="GHMP kinase, C-terminal domain"/>
    <property type="match status" value="1"/>
</dbReference>
<dbReference type="HAMAP" id="MF_00061">
    <property type="entry name" value="IspE"/>
    <property type="match status" value="1"/>
</dbReference>
<dbReference type="InterPro" id="IPR013750">
    <property type="entry name" value="GHMP_kinase_C_dom"/>
</dbReference>
<dbReference type="InterPro" id="IPR036554">
    <property type="entry name" value="GHMP_kinase_C_sf"/>
</dbReference>
<dbReference type="InterPro" id="IPR006204">
    <property type="entry name" value="GHMP_kinase_N_dom"/>
</dbReference>
<dbReference type="InterPro" id="IPR004424">
    <property type="entry name" value="IspE"/>
</dbReference>
<dbReference type="InterPro" id="IPR020568">
    <property type="entry name" value="Ribosomal_Su5_D2-typ_SF"/>
</dbReference>
<dbReference type="InterPro" id="IPR014721">
    <property type="entry name" value="Ribsml_uS5_D2-typ_fold_subgr"/>
</dbReference>
<dbReference type="NCBIfam" id="TIGR00154">
    <property type="entry name" value="ispE"/>
    <property type="match status" value="1"/>
</dbReference>
<dbReference type="NCBIfam" id="NF011202">
    <property type="entry name" value="PRK14608.1"/>
    <property type="match status" value="1"/>
</dbReference>
<dbReference type="PANTHER" id="PTHR43527">
    <property type="entry name" value="4-DIPHOSPHOCYTIDYL-2-C-METHYL-D-ERYTHRITOL KINASE, CHLOROPLASTIC"/>
    <property type="match status" value="1"/>
</dbReference>
<dbReference type="PANTHER" id="PTHR43527:SF2">
    <property type="entry name" value="4-DIPHOSPHOCYTIDYL-2-C-METHYL-D-ERYTHRITOL KINASE, CHLOROPLASTIC"/>
    <property type="match status" value="1"/>
</dbReference>
<dbReference type="Pfam" id="PF08544">
    <property type="entry name" value="GHMP_kinases_C"/>
    <property type="match status" value="1"/>
</dbReference>
<dbReference type="Pfam" id="PF00288">
    <property type="entry name" value="GHMP_kinases_N"/>
    <property type="match status" value="1"/>
</dbReference>
<dbReference type="PIRSF" id="PIRSF010376">
    <property type="entry name" value="IspE"/>
    <property type="match status" value="1"/>
</dbReference>
<dbReference type="SUPFAM" id="SSF55060">
    <property type="entry name" value="GHMP Kinase, C-terminal domain"/>
    <property type="match status" value="1"/>
</dbReference>
<dbReference type="SUPFAM" id="SSF54211">
    <property type="entry name" value="Ribosomal protein S5 domain 2-like"/>
    <property type="match status" value="1"/>
</dbReference>
<evidence type="ECO:0000255" key="1">
    <source>
        <dbReference type="HAMAP-Rule" id="MF_00061"/>
    </source>
</evidence>
<gene>
    <name evidence="1" type="primary">ispE</name>
    <name type="ordered locus">WRi_004260</name>
</gene>
<feature type="chain" id="PRO_1000190704" description="4-diphosphocytidyl-2-C-methyl-D-erythritol kinase">
    <location>
        <begin position="1"/>
        <end position="288"/>
    </location>
</feature>
<feature type="active site" evidence="1">
    <location>
        <position position="11"/>
    </location>
</feature>
<feature type="active site" evidence="1">
    <location>
        <position position="140"/>
    </location>
</feature>
<feature type="binding site" evidence="1">
    <location>
        <begin position="100"/>
        <end position="110"/>
    </location>
    <ligand>
        <name>ATP</name>
        <dbReference type="ChEBI" id="CHEBI:30616"/>
    </ligand>
</feature>